<evidence type="ECO:0000250" key="1">
    <source>
        <dbReference type="UniProtKB" id="P53990"/>
    </source>
</evidence>
<evidence type="ECO:0000256" key="2">
    <source>
        <dbReference type="SAM" id="MobiDB-lite"/>
    </source>
</evidence>
<evidence type="ECO:0000305" key="3"/>
<dbReference type="EMBL" id="BC092631">
    <property type="protein sequence ID" value="AAH92631.1"/>
    <property type="molecule type" value="mRNA"/>
</dbReference>
<dbReference type="RefSeq" id="NP_001017454.1">
    <property type="nucleotide sequence ID" value="NM_001017454.2"/>
</dbReference>
<dbReference type="SMR" id="Q568Z6"/>
<dbReference type="FunCoup" id="Q568Z6">
    <property type="interactions" value="4056"/>
</dbReference>
<dbReference type="STRING" id="10116.ENSRNOP00000020365"/>
<dbReference type="iPTMnet" id="Q568Z6"/>
<dbReference type="PhosphoSitePlus" id="Q568Z6"/>
<dbReference type="jPOST" id="Q568Z6"/>
<dbReference type="PaxDb" id="10116-ENSRNOP00000020365"/>
<dbReference type="GeneID" id="307833"/>
<dbReference type="KEGG" id="rno:307833"/>
<dbReference type="UCSC" id="RGD:1307799">
    <property type="organism name" value="rat"/>
</dbReference>
<dbReference type="AGR" id="RGD:1307799"/>
<dbReference type="CTD" id="9798"/>
<dbReference type="RGD" id="1307799">
    <property type="gene designation" value="Ist1"/>
</dbReference>
<dbReference type="VEuPathDB" id="HostDB:ENSRNOG00000015144"/>
<dbReference type="eggNOG" id="KOG2027">
    <property type="taxonomic scope" value="Eukaryota"/>
</dbReference>
<dbReference type="HOGENOM" id="CLU_037652_0_0_1"/>
<dbReference type="InParanoid" id="Q568Z6"/>
<dbReference type="OrthoDB" id="29853at2759"/>
<dbReference type="PhylomeDB" id="Q568Z6"/>
<dbReference type="TreeFam" id="TF314258"/>
<dbReference type="Reactome" id="R-RNO-6798695">
    <property type="pathway name" value="Neutrophil degranulation"/>
</dbReference>
<dbReference type="Reactome" id="R-RNO-9668328">
    <property type="pathway name" value="Sealing of the nuclear envelope (NE) by ESCRT-III"/>
</dbReference>
<dbReference type="PRO" id="PR:Q568Z6"/>
<dbReference type="Proteomes" id="UP000002494">
    <property type="component" value="Chromosome 19"/>
</dbReference>
<dbReference type="Bgee" id="ENSRNOG00000015144">
    <property type="expression patterns" value="Expressed in thymus and 20 other cell types or tissues"/>
</dbReference>
<dbReference type="GO" id="GO:0005813">
    <property type="term" value="C:centrosome"/>
    <property type="evidence" value="ECO:0000266"/>
    <property type="project" value="RGD"/>
</dbReference>
<dbReference type="GO" id="GO:0000785">
    <property type="term" value="C:chromatin"/>
    <property type="evidence" value="ECO:0000266"/>
    <property type="project" value="RGD"/>
</dbReference>
<dbReference type="GO" id="GO:0031410">
    <property type="term" value="C:cytoplasmic vesicle"/>
    <property type="evidence" value="ECO:0007669"/>
    <property type="project" value="UniProtKB-KW"/>
</dbReference>
<dbReference type="GO" id="GO:0005829">
    <property type="term" value="C:cytosol"/>
    <property type="evidence" value="ECO:0000266"/>
    <property type="project" value="RGD"/>
</dbReference>
<dbReference type="GO" id="GO:0005793">
    <property type="term" value="C:endoplasmic reticulum-Golgi intermediate compartment"/>
    <property type="evidence" value="ECO:0000266"/>
    <property type="project" value="RGD"/>
</dbReference>
<dbReference type="GO" id="GO:0090543">
    <property type="term" value="C:Flemming body"/>
    <property type="evidence" value="ECO:0000266"/>
    <property type="project" value="RGD"/>
</dbReference>
<dbReference type="GO" id="GO:0030496">
    <property type="term" value="C:midbody"/>
    <property type="evidence" value="ECO:0000266"/>
    <property type="project" value="RGD"/>
</dbReference>
<dbReference type="GO" id="GO:0005635">
    <property type="term" value="C:nuclear envelope"/>
    <property type="evidence" value="ECO:0007669"/>
    <property type="project" value="UniProtKB-SubCell"/>
</dbReference>
<dbReference type="GO" id="GO:0090541">
    <property type="term" value="F:MIT domain binding"/>
    <property type="evidence" value="ECO:0000266"/>
    <property type="project" value="RGD"/>
</dbReference>
<dbReference type="GO" id="GO:0019904">
    <property type="term" value="F:protein domain specific binding"/>
    <property type="evidence" value="ECO:0000266"/>
    <property type="project" value="RGD"/>
</dbReference>
<dbReference type="GO" id="GO:0044877">
    <property type="term" value="F:protein-containing complex binding"/>
    <property type="evidence" value="ECO:0000266"/>
    <property type="project" value="RGD"/>
</dbReference>
<dbReference type="GO" id="GO:0051301">
    <property type="term" value="P:cell division"/>
    <property type="evidence" value="ECO:0000266"/>
    <property type="project" value="RGD"/>
</dbReference>
<dbReference type="GO" id="GO:0048668">
    <property type="term" value="P:collateral sprouting"/>
    <property type="evidence" value="ECO:0000266"/>
    <property type="project" value="RGD"/>
</dbReference>
<dbReference type="GO" id="GO:0061640">
    <property type="term" value="P:cytoskeleton-dependent cytokinesis"/>
    <property type="evidence" value="ECO:0000266"/>
    <property type="project" value="RGD"/>
</dbReference>
<dbReference type="GO" id="GO:0045184">
    <property type="term" value="P:establishment of protein localization"/>
    <property type="evidence" value="ECO:0000266"/>
    <property type="project" value="RGD"/>
</dbReference>
<dbReference type="GO" id="GO:0061952">
    <property type="term" value="P:midbody abscission"/>
    <property type="evidence" value="ECO:0000266"/>
    <property type="project" value="RGD"/>
</dbReference>
<dbReference type="GO" id="GO:0048672">
    <property type="term" value="P:positive regulation of collateral sprouting"/>
    <property type="evidence" value="ECO:0000266"/>
    <property type="project" value="RGD"/>
</dbReference>
<dbReference type="GO" id="GO:0045862">
    <property type="term" value="P:positive regulation of proteolysis"/>
    <property type="evidence" value="ECO:0000266"/>
    <property type="project" value="RGD"/>
</dbReference>
<dbReference type="GO" id="GO:0008104">
    <property type="term" value="P:protein localization"/>
    <property type="evidence" value="ECO:0000266"/>
    <property type="project" value="RGD"/>
</dbReference>
<dbReference type="GO" id="GO:0015031">
    <property type="term" value="P:protein transport"/>
    <property type="evidence" value="ECO:0007669"/>
    <property type="project" value="InterPro"/>
</dbReference>
<dbReference type="FunFam" id="1.20.1260.60:FF:000001">
    <property type="entry name" value="IST1 homolog isoform X1"/>
    <property type="match status" value="1"/>
</dbReference>
<dbReference type="Gene3D" id="1.20.1260.60">
    <property type="entry name" value="Vacuolar protein sorting-associated protein Ist1"/>
    <property type="match status" value="1"/>
</dbReference>
<dbReference type="InterPro" id="IPR005061">
    <property type="entry name" value="Ist1"/>
</dbReference>
<dbReference type="InterPro" id="IPR042277">
    <property type="entry name" value="IST1-like"/>
</dbReference>
<dbReference type="PANTHER" id="PTHR12161">
    <property type="entry name" value="IST1 FAMILY MEMBER"/>
    <property type="match status" value="1"/>
</dbReference>
<dbReference type="PANTHER" id="PTHR12161:SF5">
    <property type="entry name" value="IST1 HOMOLOG"/>
    <property type="match status" value="1"/>
</dbReference>
<dbReference type="Pfam" id="PF03398">
    <property type="entry name" value="Ist1"/>
    <property type="match status" value="1"/>
</dbReference>
<comment type="function">
    <text evidence="1">ESCRT-III-like protein involved in cytokinesis, nuclear envelope reassembly and endosomal tubulation (By similarity). Is required for efficient abscission during cytokinesis (By similarity). Involved in recruiting VPS4A and/or VPS4B to the midbody of dividing cells (By similarity). During late anaphase, involved in nuclear envelope reassembly and mitotic spindle disassembly together with the ESCRT-III complex: IST1 acts by mediating the recruitment of SPAST to the nuclear membrane, leading to microtubule severing (By similarity). Recruited to the reforming nuclear envelope (NE) during anaphase by LEMD2 (By similarity). Regulates early endosomal tubulation together with the ESCRT-III complex by mediating the recruitment of SPAST (By similarity).</text>
</comment>
<comment type="subunit">
    <text evidence="1">Interacts with CHMP1A, CHMP1B, VPS4A and VTA1. Interacts with SPAST, STAMBP, and USP8. May interact with VPS37B. May associate with the ESCRT-I complex. Interacts with MITD1, in competition with VSP4. Interacts with SPART (via MIT domain); leading to the recruitment of SPART to midbodies. Interacts with SPAST.</text>
</comment>
<comment type="subcellular location">
    <subcellularLocation>
        <location evidence="1">Cytoplasmic vesicle</location>
    </subcellularLocation>
    <subcellularLocation>
        <location evidence="1">Cytoplasm</location>
        <location evidence="1">Cytoskeleton</location>
        <location evidence="1">Microtubule organizing center</location>
        <location evidence="1">Centrosome</location>
    </subcellularLocation>
    <subcellularLocation>
        <location evidence="1">Midbody</location>
    </subcellularLocation>
    <subcellularLocation>
        <location evidence="1">Nucleus envelope</location>
    </subcellularLocation>
    <text evidence="1">Localizes to centrosome and midbody of dividing cells. Colocalized with SPART to the ends of Flemming bodies during cytokinesis. Localizes to the reforming nuclear envelope on chromatin disks during late anaphase.</text>
</comment>
<comment type="similarity">
    <text evidence="3">Belongs to the IST1 family.</text>
</comment>
<accession>Q568Z6</accession>
<name>IST1_RAT</name>
<proteinExistence type="evidence at transcript level"/>
<keyword id="KW-0131">Cell cycle</keyword>
<keyword id="KW-0132">Cell division</keyword>
<keyword id="KW-0963">Cytoplasm</keyword>
<keyword id="KW-0968">Cytoplasmic vesicle</keyword>
<keyword id="KW-0206">Cytoskeleton</keyword>
<keyword id="KW-0539">Nucleus</keyword>
<keyword id="KW-0597">Phosphoprotein</keyword>
<keyword id="KW-1185">Reference proteome</keyword>
<reference key="1">
    <citation type="journal article" date="2004" name="Genome Res.">
        <title>The status, quality, and expansion of the NIH full-length cDNA project: the Mammalian Gene Collection (MGC).</title>
        <authorList>
            <consortium name="The MGC Project Team"/>
        </authorList>
    </citation>
    <scope>NUCLEOTIDE SEQUENCE [LARGE SCALE MRNA]</scope>
    <source>
        <tissue>Brain</tissue>
    </source>
</reference>
<organism>
    <name type="scientific">Rattus norvegicus</name>
    <name type="common">Rat</name>
    <dbReference type="NCBI Taxonomy" id="10116"/>
    <lineage>
        <taxon>Eukaryota</taxon>
        <taxon>Metazoa</taxon>
        <taxon>Chordata</taxon>
        <taxon>Craniata</taxon>
        <taxon>Vertebrata</taxon>
        <taxon>Euteleostomi</taxon>
        <taxon>Mammalia</taxon>
        <taxon>Eutheria</taxon>
        <taxon>Euarchontoglires</taxon>
        <taxon>Glires</taxon>
        <taxon>Rodentia</taxon>
        <taxon>Myomorpha</taxon>
        <taxon>Muroidea</taxon>
        <taxon>Muridae</taxon>
        <taxon>Murinae</taxon>
        <taxon>Rattus</taxon>
    </lineage>
</organism>
<sequence>MLGSGFKAERLRVNLRLVINRLKLLEKKKTELAQKARKEIADYLAAGKDERARIRVEHIIREDYLVEAMEILELYCDLLLARFGLIQSMKELDSGLAESVSTLIWAAPRLQSEVAELKIVADQLCAKYSKEYGKLCRTNQIGTVNDRLMHKLSVEAPPKILVERYLIEIAKNYNVPYEPDSVVMAEAPVGVETDLIDVGFTDDVKKGGPGRGGGGGFTAPVGAPDGTMPMPMPMPMPMPSPSPNAPFAYPLPKGPSDFSGLPVGTYQAFPNIHPPQIPATPPSYESVDDINADKNVSSAQIVGPKPEAPAKPPSRPVDNYNTFVLPELPSVPDTLPTASAGASTSASEDIDFDDLSRRFEELKKKT</sequence>
<protein>
    <recommendedName>
        <fullName>IST1 homolog</fullName>
    </recommendedName>
    <alternativeName>
        <fullName evidence="1">Charged multivesicular body protein 8</fullName>
        <shortName evidence="1">CHMP8</shortName>
    </alternativeName>
</protein>
<feature type="chain" id="PRO_0000327595" description="IST1 homolog">
    <location>
        <begin position="1"/>
        <end position="366"/>
    </location>
</feature>
<feature type="region of interest" description="Disordered" evidence="2">
    <location>
        <begin position="297"/>
        <end position="354"/>
    </location>
</feature>
<feature type="compositionally biased region" description="Pro residues" evidence="2">
    <location>
        <begin position="306"/>
        <end position="315"/>
    </location>
</feature>
<feature type="compositionally biased region" description="Low complexity" evidence="2">
    <location>
        <begin position="337"/>
        <end position="347"/>
    </location>
</feature>
<feature type="modified residue" description="Phosphoserine" evidence="1">
    <location>
        <position position="4"/>
    </location>
</feature>
<feature type="modified residue" description="Phosphotyrosine" evidence="1">
    <location>
        <position position="43"/>
    </location>
</feature>
<gene>
    <name type="primary">Ist1</name>
</gene>